<feature type="chain" id="PRO_0000304784" description="Protein CIMAP1C">
    <location>
        <begin position="1"/>
        <end position="201"/>
    </location>
</feature>
<feature type="repeat" description="STPGR">
    <location>
        <begin position="171"/>
        <end position="186"/>
    </location>
</feature>
<feature type="region of interest" description="Disordered" evidence="1">
    <location>
        <begin position="172"/>
        <end position="201"/>
    </location>
</feature>
<feature type="compositionally biased region" description="Polar residues" evidence="1">
    <location>
        <begin position="191"/>
        <end position="201"/>
    </location>
</feature>
<dbReference type="EMBL" id="BC112632">
    <property type="protein sequence ID" value="AAI12633.1"/>
    <property type="molecule type" value="mRNA"/>
</dbReference>
<dbReference type="RefSeq" id="NP_001068661.1">
    <property type="nucleotide sequence ID" value="NM_001075193.1"/>
</dbReference>
<dbReference type="STRING" id="9913.ENSBTAP00000025983"/>
<dbReference type="PaxDb" id="9913-ENSBTAP00000025983"/>
<dbReference type="GeneID" id="505190"/>
<dbReference type="KEGG" id="bta:505190"/>
<dbReference type="CTD" id="505190"/>
<dbReference type="eggNOG" id="ENOG502S2VQ">
    <property type="taxonomic scope" value="Eukaryota"/>
</dbReference>
<dbReference type="HOGENOM" id="CLU_1359989_0_0_1"/>
<dbReference type="InParanoid" id="Q2KIH8"/>
<dbReference type="OrthoDB" id="429991at2759"/>
<dbReference type="TreeFam" id="TF325804"/>
<dbReference type="Proteomes" id="UP000009136">
    <property type="component" value="Unplaced"/>
</dbReference>
<dbReference type="GO" id="GO:0005856">
    <property type="term" value="C:cytoskeleton"/>
    <property type="evidence" value="ECO:0000318"/>
    <property type="project" value="GO_Central"/>
</dbReference>
<evidence type="ECO:0000256" key="1">
    <source>
        <dbReference type="SAM" id="MobiDB-lite"/>
    </source>
</evidence>
<evidence type="ECO:0000305" key="2"/>
<organism>
    <name type="scientific">Bos taurus</name>
    <name type="common">Bovine</name>
    <dbReference type="NCBI Taxonomy" id="9913"/>
    <lineage>
        <taxon>Eukaryota</taxon>
        <taxon>Metazoa</taxon>
        <taxon>Chordata</taxon>
        <taxon>Craniata</taxon>
        <taxon>Vertebrata</taxon>
        <taxon>Euteleostomi</taxon>
        <taxon>Mammalia</taxon>
        <taxon>Eutheria</taxon>
        <taxon>Laurasiatheria</taxon>
        <taxon>Artiodactyla</taxon>
        <taxon>Ruminantia</taxon>
        <taxon>Pecora</taxon>
        <taxon>Bovidae</taxon>
        <taxon>Bovinae</taxon>
        <taxon>Bos</taxon>
    </lineage>
</organism>
<name>CMA1C_BOVIN</name>
<keyword id="KW-1185">Reference proteome</keyword>
<protein>
    <recommendedName>
        <fullName>Protein CIMAP1C</fullName>
    </recommendedName>
    <alternativeName>
        <fullName>Outer dense fiber protein 3-like protein 1</fullName>
    </alternativeName>
</protein>
<sequence>MKLPKGVKNPVFYGQQPEKKVPMSSGHEIKQTPVVLAMLKGPGPAKYLRPSCTGYIDHDVSMFQEPAYTLHAWHPEKRIMDIRSPGPCYFLDPKITRFGMASCPQVPMAEHISNLPWPPWTRTGSTRICQEAPDRPHTPGQSRPSIRTAALSIAWPNALATRWTTHLGLAPAPTMSSRSGHTSPARLLSPWASSTRPTYAR</sequence>
<accession>Q2KIH8</accession>
<comment type="similarity">
    <text evidence="2">Belongs to the CIMAP family.</text>
</comment>
<reference key="1">
    <citation type="submission" date="2006-01" db="EMBL/GenBank/DDBJ databases">
        <authorList>
            <consortium name="NIH - Mammalian Gene Collection (MGC) project"/>
        </authorList>
    </citation>
    <scope>NUCLEOTIDE SEQUENCE [LARGE SCALE MRNA]</scope>
    <source>
        <strain>Hereford</strain>
        <tissue>Testis</tissue>
    </source>
</reference>
<proteinExistence type="evidence at transcript level"/>
<gene>
    <name type="primary">CIMAP1C</name>
    <name type="synonym">ODF3L1</name>
</gene>